<name>EDSB_MAIZE</name>
<comment type="function">
    <text evidence="5 7">Component of the volatile terpenes biosynthesis pathways (PubMed:30187155). Dihydroxylated sesquiterpenoid synthase that generates dually hydroxylated products directly from (E,E)-farnesyl diphosphate, primarily eudesmane-2,11-diol, along with two closely related structural isomers (PubMed:29570233).</text>
</comment>
<comment type="catalytic activity">
    <reaction evidence="5">
        <text>(2E,6E)-farnesyl diphosphate + 2 H2O = 7-epi-ent-eudesmane-5,11-diol + diphosphate</text>
        <dbReference type="Rhea" id="RHEA:58164"/>
        <dbReference type="ChEBI" id="CHEBI:15377"/>
        <dbReference type="ChEBI" id="CHEBI:33019"/>
        <dbReference type="ChEBI" id="CHEBI:142536"/>
        <dbReference type="ChEBI" id="CHEBI:175763"/>
        <dbReference type="EC" id="4.2.3.197"/>
    </reaction>
    <physiologicalReaction direction="left-to-right" evidence="5">
        <dbReference type="Rhea" id="RHEA:58165"/>
    </physiologicalReaction>
</comment>
<comment type="cofactor">
    <cofactor evidence="1">
        <name>Mg(2+)</name>
        <dbReference type="ChEBI" id="CHEBI:18420"/>
    </cofactor>
    <cofactor evidence="1">
        <name>Mn(2+)</name>
        <dbReference type="ChEBI" id="CHEBI:29035"/>
    </cofactor>
    <text evidence="1">Binds 3 Mg(2+) or Mn(2+) ions per subunit.</text>
</comment>
<comment type="pathway">
    <text evidence="9">Secondary metabolite biosynthesis; terpenoid biosynthesis.</text>
</comment>
<comment type="subunit">
    <text evidence="3">Monomer.</text>
</comment>
<comment type="subcellular location">
    <subcellularLocation>
        <location evidence="4">Cytoplasm</location>
    </subcellularLocation>
</comment>
<comment type="tissue specificity">
    <text evidence="5">Specifically expressed in roots.</text>
</comment>
<comment type="induction">
    <text evidence="5">Induced by fungal pathogen infection (e.g. F.verticillioide).</text>
</comment>
<comment type="domain">
    <text evidence="1">The Asp-Asp-Xaa-Xaa-Asp/Glu (DDXXD/E) motif is important for the catalytic activity, presumably through binding to Mg(2+).</text>
</comment>
<comment type="similarity">
    <text evidence="8">Belongs to the terpene synthase family.</text>
</comment>
<proteinExistence type="evidence at protein level"/>
<gene>
    <name evidence="6" type="primary">EDS</name>
    <name evidence="7" type="synonym">TPS17</name>
    <name evidence="7" type="ORF">GRMZM2G010356</name>
    <name evidence="11" type="ORF">ZEAMMB73_Zm00001d004509</name>
</gene>
<feature type="chain" id="PRO_0000447517" description="Eudesmanediol synthase">
    <location>
        <begin position="1"/>
        <end position="557"/>
    </location>
</feature>
<feature type="short sequence motif" description="DDXXD motif" evidence="1">
    <location>
        <begin position="310"/>
        <end position="314"/>
    </location>
</feature>
<feature type="binding site" evidence="2">
    <location>
        <position position="310"/>
    </location>
    <ligand>
        <name>Mg(2+)</name>
        <dbReference type="ChEBI" id="CHEBI:18420"/>
        <label>1</label>
    </ligand>
</feature>
<feature type="binding site" evidence="2">
    <location>
        <position position="310"/>
    </location>
    <ligand>
        <name>Mg(2+)</name>
        <dbReference type="ChEBI" id="CHEBI:18420"/>
        <label>2</label>
    </ligand>
</feature>
<feature type="binding site" evidence="1">
    <location>
        <position position="310"/>
    </location>
    <ligand>
        <name>substrate</name>
    </ligand>
</feature>
<feature type="binding site" evidence="2">
    <location>
        <position position="314"/>
    </location>
    <ligand>
        <name>Mg(2+)</name>
        <dbReference type="ChEBI" id="CHEBI:18420"/>
        <label>1</label>
    </ligand>
</feature>
<feature type="binding site" evidence="2">
    <location>
        <position position="314"/>
    </location>
    <ligand>
        <name>Mg(2+)</name>
        <dbReference type="ChEBI" id="CHEBI:18420"/>
        <label>2</label>
    </ligand>
</feature>
<feature type="binding site" evidence="1">
    <location>
        <position position="314"/>
    </location>
    <ligand>
        <name>substrate</name>
    </ligand>
</feature>
<feature type="binding site" evidence="1">
    <location>
        <position position="450"/>
    </location>
    <ligand>
        <name>substrate</name>
    </ligand>
</feature>
<feature type="binding site" evidence="2">
    <location>
        <position position="453"/>
    </location>
    <ligand>
        <name>Mg(2+)</name>
        <dbReference type="ChEBI" id="CHEBI:18420"/>
        <label>3</label>
    </ligand>
</feature>
<feature type="binding site" evidence="1">
    <location>
        <position position="453"/>
    </location>
    <ligand>
        <name>substrate</name>
    </ligand>
</feature>
<feature type="binding site" evidence="2">
    <location>
        <position position="457"/>
    </location>
    <ligand>
        <name>Mg(2+)</name>
        <dbReference type="ChEBI" id="CHEBI:18420"/>
        <label>3</label>
    </ligand>
</feature>
<feature type="site" description="Required for the use of hedycaryol as a transient intermediate during the reprotonation of germacrene A" evidence="5">
    <location>
        <position position="303"/>
    </location>
</feature>
<feature type="mutagenesis site" description="Predominant production of hedycaryol." evidence="5">
    <original>F</original>
    <variation>A</variation>
    <location>
        <position position="303"/>
    </location>
</feature>
<feature type="mutagenesis site" description="Increased accumulation of hedycaryol, but presence of sesquiterpenoid diols." evidence="5">
    <original>Y</original>
    <variation>F</variation>
    <location>
        <position position="529"/>
    </location>
</feature>
<feature type="sequence conflict" description="In Ref. 2; ACG29886." evidence="8" ref="2">
    <original>T</original>
    <variation>P</variation>
    <location>
        <position position="37"/>
    </location>
</feature>
<feature type="sequence conflict" description="In Ref. 2; ACG29886." evidence="8" ref="2">
    <original>I</original>
    <variation>V</variation>
    <location>
        <position position="73"/>
    </location>
</feature>
<feature type="sequence conflict" description="In Ref. 2; ACG29886." evidence="8" ref="2">
    <original>E</original>
    <variation>D</variation>
    <location>
        <position position="262"/>
    </location>
</feature>
<feature type="sequence conflict" description="In Ref. 3; ACL54589." evidence="8" ref="3">
    <original>R</original>
    <variation>W</variation>
    <location>
        <position position="296"/>
    </location>
</feature>
<feature type="sequence conflict" description="In Ref. 2; ACG29886." evidence="8" ref="2">
    <original>L</original>
    <variation>V</variation>
    <location>
        <position position="519"/>
    </location>
</feature>
<accession>A0A1D6EFT8</accession>
<accession>B6SYF3</accession>
<accession>B8A340</accession>
<dbReference type="EC" id="4.2.3.197" evidence="5"/>
<dbReference type="EMBL" id="CM007648">
    <property type="protein sequence ID" value="ONM19045.1"/>
    <property type="molecule type" value="Genomic_DNA"/>
</dbReference>
<dbReference type="EMBL" id="EU957768">
    <property type="protein sequence ID" value="ACG29886.1"/>
    <property type="molecule type" value="mRNA"/>
</dbReference>
<dbReference type="EMBL" id="BT055982">
    <property type="protein sequence ID" value="ACL54589.1"/>
    <property type="molecule type" value="mRNA"/>
</dbReference>
<dbReference type="RefSeq" id="NP_001148146.1">
    <property type="nucleotide sequence ID" value="NM_001154674.1"/>
</dbReference>
<dbReference type="SMR" id="A0A1D6EFT8"/>
<dbReference type="FunCoup" id="A0A1D6EFT8">
    <property type="interactions" value="275"/>
</dbReference>
<dbReference type="IntAct" id="A0A1D6EFT8">
    <property type="interactions" value="1"/>
</dbReference>
<dbReference type="STRING" id="4577.A0A1D6EFT8"/>
<dbReference type="PaxDb" id="4577-GRMZM2G010356_P01"/>
<dbReference type="EnsemblPlants" id="Zm00001eb089360_T001">
    <property type="protein sequence ID" value="Zm00001eb089360_P001"/>
    <property type="gene ID" value="Zm00001eb089360"/>
</dbReference>
<dbReference type="GeneID" id="100281754"/>
<dbReference type="Gramene" id="Zm00001eb089360_T001">
    <property type="protein sequence ID" value="Zm00001eb089360_P001"/>
    <property type="gene ID" value="Zm00001eb089360"/>
</dbReference>
<dbReference type="KEGG" id="zma:100281754"/>
<dbReference type="eggNOG" id="ENOG502QUCN">
    <property type="taxonomic scope" value="Eukaryota"/>
</dbReference>
<dbReference type="InParanoid" id="A0A1D6EFT8"/>
<dbReference type="OMA" id="NHFREVI"/>
<dbReference type="OrthoDB" id="1877784at2759"/>
<dbReference type="UniPathway" id="UPA00213"/>
<dbReference type="Proteomes" id="UP000007305">
    <property type="component" value="Chromosome 2"/>
</dbReference>
<dbReference type="ExpressionAtlas" id="A0A1D6EFT8">
    <property type="expression patterns" value="baseline and differential"/>
</dbReference>
<dbReference type="GO" id="GO:0005737">
    <property type="term" value="C:cytoplasm"/>
    <property type="evidence" value="ECO:0007669"/>
    <property type="project" value="UniProtKB-SubCell"/>
</dbReference>
<dbReference type="GO" id="GO:0000287">
    <property type="term" value="F:magnesium ion binding"/>
    <property type="evidence" value="ECO:0007669"/>
    <property type="project" value="InterPro"/>
</dbReference>
<dbReference type="GO" id="GO:0010333">
    <property type="term" value="F:terpene synthase activity"/>
    <property type="evidence" value="ECO:0000314"/>
    <property type="project" value="UniProtKB"/>
</dbReference>
<dbReference type="GO" id="GO:0050832">
    <property type="term" value="P:defense response to fungus"/>
    <property type="evidence" value="ECO:0000270"/>
    <property type="project" value="UniProtKB"/>
</dbReference>
<dbReference type="GO" id="GO:0016102">
    <property type="term" value="P:diterpenoid biosynthetic process"/>
    <property type="evidence" value="ECO:0007669"/>
    <property type="project" value="InterPro"/>
</dbReference>
<dbReference type="GO" id="GO:0051762">
    <property type="term" value="P:sesquiterpene biosynthetic process"/>
    <property type="evidence" value="ECO:0000314"/>
    <property type="project" value="UniProtKB"/>
</dbReference>
<dbReference type="GO" id="GO:0046246">
    <property type="term" value="P:terpene biosynthetic process"/>
    <property type="evidence" value="ECO:0000314"/>
    <property type="project" value="UniProtKB"/>
</dbReference>
<dbReference type="CDD" id="cd00684">
    <property type="entry name" value="Terpene_cyclase_plant_C1"/>
    <property type="match status" value="1"/>
</dbReference>
<dbReference type="FunFam" id="1.10.600.10:FF:000007">
    <property type="entry name" value="Isoprene synthase, chloroplastic"/>
    <property type="match status" value="1"/>
</dbReference>
<dbReference type="FunFam" id="1.50.10.130:FF:000006">
    <property type="entry name" value="Terpene synthase 7"/>
    <property type="match status" value="1"/>
</dbReference>
<dbReference type="Gene3D" id="1.10.600.10">
    <property type="entry name" value="Farnesyl Diphosphate Synthase"/>
    <property type="match status" value="1"/>
</dbReference>
<dbReference type="Gene3D" id="1.50.10.130">
    <property type="entry name" value="Terpene synthase, N-terminal domain"/>
    <property type="match status" value="1"/>
</dbReference>
<dbReference type="InterPro" id="IPR008949">
    <property type="entry name" value="Isoprenoid_synthase_dom_sf"/>
</dbReference>
<dbReference type="InterPro" id="IPR034741">
    <property type="entry name" value="Terpene_cyclase-like_1_C"/>
</dbReference>
<dbReference type="InterPro" id="IPR044814">
    <property type="entry name" value="Terpene_cyclase_plant_C1"/>
</dbReference>
<dbReference type="InterPro" id="IPR001906">
    <property type="entry name" value="Terpene_synth_N"/>
</dbReference>
<dbReference type="InterPro" id="IPR036965">
    <property type="entry name" value="Terpene_synth_N_sf"/>
</dbReference>
<dbReference type="InterPro" id="IPR050148">
    <property type="entry name" value="Terpene_synthase-like"/>
</dbReference>
<dbReference type="InterPro" id="IPR005630">
    <property type="entry name" value="Terpene_synthase_metal-bd"/>
</dbReference>
<dbReference type="InterPro" id="IPR008930">
    <property type="entry name" value="Terpenoid_cyclase/PrenylTrfase"/>
</dbReference>
<dbReference type="PANTHER" id="PTHR31225:SF109">
    <property type="entry name" value="EUDESMANEDIOL SYNTHASE"/>
    <property type="match status" value="1"/>
</dbReference>
<dbReference type="PANTHER" id="PTHR31225">
    <property type="entry name" value="OS04G0344100 PROTEIN-RELATED"/>
    <property type="match status" value="1"/>
</dbReference>
<dbReference type="Pfam" id="PF01397">
    <property type="entry name" value="Terpene_synth"/>
    <property type="match status" value="1"/>
</dbReference>
<dbReference type="Pfam" id="PF03936">
    <property type="entry name" value="Terpene_synth_C"/>
    <property type="match status" value="1"/>
</dbReference>
<dbReference type="SFLD" id="SFLDS00005">
    <property type="entry name" value="Isoprenoid_Synthase_Type_I"/>
    <property type="match status" value="1"/>
</dbReference>
<dbReference type="SFLD" id="SFLDG01019">
    <property type="entry name" value="Terpene_Cyclase_Like_1_C_Termi"/>
    <property type="match status" value="1"/>
</dbReference>
<dbReference type="SUPFAM" id="SSF48239">
    <property type="entry name" value="Terpenoid cyclases/Protein prenyltransferases"/>
    <property type="match status" value="1"/>
</dbReference>
<dbReference type="SUPFAM" id="SSF48576">
    <property type="entry name" value="Terpenoid synthases"/>
    <property type="match status" value="1"/>
</dbReference>
<sequence>MAPSNIVVQSSSTPPVAGGDEEFAPSVWGDFFVTYATPVSQASEQRMSERAELLKAQVRQAFDAASMDVAGLITYVDTLERLGLDNHFRDLIGAALERIGAEELPEHGGGLHIVALRFRLLRQHGIWVSTDVFDAFREDAGGFCSSLCSDDPRGLLSLYNAAHMAVPGEVVLDDAIAFARGRLLDIISKGEVRSPVSEQITRALDIPLPRFTRRLETMHYIAEYEHEEAHDGLLLELARLNFVLVRALHLRELKDLSLWWRELYNTVKLPYARDRMVEIYFWTCGMLHEEEYSLARMFFAKTFGMVSLMDDTFDVHATLDECHKLKEAMQRWDESEVSILPEYLRLLYIKTLSNFKEFEEILEPNKKYRMAYTKEAYKLCSKNYLKEAIWSNQKYQPSFKEHEELSIMTSGLPMLTILTLMGFGDEATPEAFEWVSSVPEMVRAGSQVTRFLNDLSSYKLGKNKKDMPGSVETYMVENGLTGDEAAAAIAALLENRWRILNQTRMEIDHTLLPAAQVVLNMARANEIIYLHGRDAYTFGADLKDLVTTLFLKQVLPL</sequence>
<protein>
    <recommendedName>
        <fullName evidence="6">Eudesmanediol synthase</fullName>
        <shortName evidence="6">ZmEDS</shortName>
        <ecNumber evidence="5">4.2.3.197</ecNumber>
    </recommendedName>
    <alternativeName>
        <fullName evidence="7">Terpene synthase 17</fullName>
    </alternativeName>
    <alternativeName>
        <fullName evidence="10">Terpene synthase 7</fullName>
    </alternativeName>
</protein>
<organism>
    <name type="scientific">Zea mays</name>
    <name type="common">Maize</name>
    <dbReference type="NCBI Taxonomy" id="4577"/>
    <lineage>
        <taxon>Eukaryota</taxon>
        <taxon>Viridiplantae</taxon>
        <taxon>Streptophyta</taxon>
        <taxon>Embryophyta</taxon>
        <taxon>Tracheophyta</taxon>
        <taxon>Spermatophyta</taxon>
        <taxon>Magnoliopsida</taxon>
        <taxon>Liliopsida</taxon>
        <taxon>Poales</taxon>
        <taxon>Poaceae</taxon>
        <taxon>PACMAD clade</taxon>
        <taxon>Panicoideae</taxon>
        <taxon>Andropogonodae</taxon>
        <taxon>Andropogoneae</taxon>
        <taxon>Tripsacinae</taxon>
        <taxon>Zea</taxon>
    </lineage>
</organism>
<keyword id="KW-0963">Cytoplasm</keyword>
<keyword id="KW-0456">Lyase</keyword>
<keyword id="KW-0460">Magnesium</keyword>
<keyword id="KW-0464">Manganese</keyword>
<keyword id="KW-0479">Metal-binding</keyword>
<keyword id="KW-0611">Plant defense</keyword>
<keyword id="KW-1185">Reference proteome</keyword>
<reference key="1">
    <citation type="journal article" date="2009" name="Science">
        <title>The B73 maize genome: complexity, diversity, and dynamics.</title>
        <authorList>
            <person name="Schnable P.S."/>
            <person name="Ware D."/>
            <person name="Fulton R.S."/>
            <person name="Stein J.C."/>
            <person name="Wei F."/>
            <person name="Pasternak S."/>
            <person name="Liang C."/>
            <person name="Zhang J."/>
            <person name="Fulton L."/>
            <person name="Graves T.A."/>
            <person name="Minx P."/>
            <person name="Reily A.D."/>
            <person name="Courtney L."/>
            <person name="Kruchowski S.S."/>
            <person name="Tomlinson C."/>
            <person name="Strong C."/>
            <person name="Delehaunty K."/>
            <person name="Fronick C."/>
            <person name="Courtney B."/>
            <person name="Rock S.M."/>
            <person name="Belter E."/>
            <person name="Du F."/>
            <person name="Kim K."/>
            <person name="Abbott R.M."/>
            <person name="Cotton M."/>
            <person name="Levy A."/>
            <person name="Marchetto P."/>
            <person name="Ochoa K."/>
            <person name="Jackson S.M."/>
            <person name="Gillam B."/>
            <person name="Chen W."/>
            <person name="Yan L."/>
            <person name="Higginbotham J."/>
            <person name="Cardenas M."/>
            <person name="Waligorski J."/>
            <person name="Applebaum E."/>
            <person name="Phelps L."/>
            <person name="Falcone J."/>
            <person name="Kanchi K."/>
            <person name="Thane T."/>
            <person name="Scimone A."/>
            <person name="Thane N."/>
            <person name="Henke J."/>
            <person name="Wang T."/>
            <person name="Ruppert J."/>
            <person name="Shah N."/>
            <person name="Rotter K."/>
            <person name="Hodges J."/>
            <person name="Ingenthron E."/>
            <person name="Cordes M."/>
            <person name="Kohlberg S."/>
            <person name="Sgro J."/>
            <person name="Delgado B."/>
            <person name="Mead K."/>
            <person name="Chinwalla A."/>
            <person name="Leonard S."/>
            <person name="Crouse K."/>
            <person name="Collura K."/>
            <person name="Kudrna D."/>
            <person name="Currie J."/>
            <person name="He R."/>
            <person name="Angelova A."/>
            <person name="Rajasekar S."/>
            <person name="Mueller T."/>
            <person name="Lomeli R."/>
            <person name="Scara G."/>
            <person name="Ko A."/>
            <person name="Delaney K."/>
            <person name="Wissotski M."/>
            <person name="Lopez G."/>
            <person name="Campos D."/>
            <person name="Braidotti M."/>
            <person name="Ashley E."/>
            <person name="Golser W."/>
            <person name="Kim H."/>
            <person name="Lee S."/>
            <person name="Lin J."/>
            <person name="Dujmic Z."/>
            <person name="Kim W."/>
            <person name="Talag J."/>
            <person name="Zuccolo A."/>
            <person name="Fan C."/>
            <person name="Sebastian A."/>
            <person name="Kramer M."/>
            <person name="Spiegel L."/>
            <person name="Nascimento L."/>
            <person name="Zutavern T."/>
            <person name="Miller B."/>
            <person name="Ambroise C."/>
            <person name="Muller S."/>
            <person name="Spooner W."/>
            <person name="Narechania A."/>
            <person name="Ren L."/>
            <person name="Wei S."/>
            <person name="Kumari S."/>
            <person name="Faga B."/>
            <person name="Levy M.J."/>
            <person name="McMahan L."/>
            <person name="Van Buren P."/>
            <person name="Vaughn M.W."/>
            <person name="Ying K."/>
            <person name="Yeh C.-T."/>
            <person name="Emrich S.J."/>
            <person name="Jia Y."/>
            <person name="Kalyanaraman A."/>
            <person name="Hsia A.-P."/>
            <person name="Barbazuk W.B."/>
            <person name="Baucom R.S."/>
            <person name="Brutnell T.P."/>
            <person name="Carpita N.C."/>
            <person name="Chaparro C."/>
            <person name="Chia J.-M."/>
            <person name="Deragon J.-M."/>
            <person name="Estill J.C."/>
            <person name="Fu Y."/>
            <person name="Jeddeloh J.A."/>
            <person name="Han Y."/>
            <person name="Lee H."/>
            <person name="Li P."/>
            <person name="Lisch D.R."/>
            <person name="Liu S."/>
            <person name="Liu Z."/>
            <person name="Nagel D.H."/>
            <person name="McCann M.C."/>
            <person name="SanMiguel P."/>
            <person name="Myers A.M."/>
            <person name="Nettleton D."/>
            <person name="Nguyen J."/>
            <person name="Penning B.W."/>
            <person name="Ponnala L."/>
            <person name="Schneider K.L."/>
            <person name="Schwartz D.C."/>
            <person name="Sharma A."/>
            <person name="Soderlund C."/>
            <person name="Springer N.M."/>
            <person name="Sun Q."/>
            <person name="Wang H."/>
            <person name="Waterman M."/>
            <person name="Westerman R."/>
            <person name="Wolfgruber T.K."/>
            <person name="Yang L."/>
            <person name="Yu Y."/>
            <person name="Zhang L."/>
            <person name="Zhou S."/>
            <person name="Zhu Q."/>
            <person name="Bennetzen J.L."/>
            <person name="Dawe R.K."/>
            <person name="Jiang J."/>
            <person name="Jiang N."/>
            <person name="Presting G.G."/>
            <person name="Wessler S.R."/>
            <person name="Aluru S."/>
            <person name="Martienssen R.A."/>
            <person name="Clifton S.W."/>
            <person name="McCombie W.R."/>
            <person name="Wing R.A."/>
            <person name="Wilson R.K."/>
        </authorList>
    </citation>
    <scope>NUCLEOTIDE SEQUENCE [LARGE SCALE GENOMIC DNA]</scope>
    <source>
        <strain>cv. B73</strain>
        <tissue>Seedling</tissue>
    </source>
</reference>
<reference key="2">
    <citation type="journal article" date="2009" name="Plant Mol. Biol.">
        <title>Insights into corn genes derived from large-scale cDNA sequencing.</title>
        <authorList>
            <person name="Alexandrov N.N."/>
            <person name="Brover V.V."/>
            <person name="Freidin S."/>
            <person name="Troukhan M.E."/>
            <person name="Tatarinova T.V."/>
            <person name="Zhang H."/>
            <person name="Swaller T.J."/>
            <person name="Lu Y.-P."/>
            <person name="Bouck J."/>
            <person name="Flavell R.B."/>
            <person name="Feldmann K.A."/>
        </authorList>
    </citation>
    <scope>NUCLEOTIDE SEQUENCE [LARGE SCALE MRNA]</scope>
</reference>
<reference key="3">
    <citation type="journal article" date="2009" name="PLoS Genet.">
        <title>Sequencing, mapping, and analysis of 27,455 maize full-length cDNAs.</title>
        <authorList>
            <person name="Soderlund C."/>
            <person name="Descour A."/>
            <person name="Kudrna D."/>
            <person name="Bomhoff M."/>
            <person name="Boyd L."/>
            <person name="Currie J."/>
            <person name="Angelova A."/>
            <person name="Collura K."/>
            <person name="Wissotski M."/>
            <person name="Ashley E."/>
            <person name="Morrow D."/>
            <person name="Fernandes J."/>
            <person name="Walbot V."/>
            <person name="Yu Y."/>
        </authorList>
    </citation>
    <scope>NUCLEOTIDE SEQUENCE [LARGE SCALE MRNA]</scope>
    <source>
        <strain>cv. B73</strain>
    </source>
</reference>
<reference key="4">
    <citation type="journal article" date="2018" name="Plant J.">
        <title>Direct production of dihydroxylated sesquiterpenoids by a maize terpene synthase.</title>
        <authorList>
            <person name="Liang J."/>
            <person name="Liu J."/>
            <person name="Brown R."/>
            <person name="Jia M."/>
            <person name="Zhou K."/>
            <person name="Peters R.J."/>
            <person name="Wang Q."/>
        </authorList>
    </citation>
    <scope>FUNCTION</scope>
    <scope>MUTAGENESIS OF PHE-303 AND TYR-529</scope>
    <scope>CATALYTIC ACTIVITY</scope>
    <scope>PATHWAY</scope>
    <scope>TISSUE SPECIFICITY</scope>
    <scope>INDUCTION BY PATHOGEN INFECTION</scope>
    <source>
        <strain>cv. Missouri 17</strain>
    </source>
</reference>
<reference key="5">
    <citation type="journal article" date="2019" name="Planta">
        <title>Biosynthesis and function of terpenoid defense compounds in maize (Zea mays).</title>
        <authorList>
            <person name="Block A.K."/>
            <person name="Vaughan M.M."/>
            <person name="Schmelz E.A."/>
            <person name="Christensen S.A."/>
        </authorList>
    </citation>
    <scope>REVIEW</scope>
</reference>
<evidence type="ECO:0000250" key="1">
    <source>
        <dbReference type="UniProtKB" id="A0A1C9J6A7"/>
    </source>
</evidence>
<evidence type="ECO:0000250" key="2">
    <source>
        <dbReference type="UniProtKB" id="Q40577"/>
    </source>
</evidence>
<evidence type="ECO:0000250" key="3">
    <source>
        <dbReference type="UniProtKB" id="Q6JD73"/>
    </source>
</evidence>
<evidence type="ECO:0000250" key="4">
    <source>
        <dbReference type="UniProtKB" id="Q6Q3H2"/>
    </source>
</evidence>
<evidence type="ECO:0000269" key="5">
    <source>
    </source>
</evidence>
<evidence type="ECO:0000303" key="6">
    <source>
    </source>
</evidence>
<evidence type="ECO:0000303" key="7">
    <source>
    </source>
</evidence>
<evidence type="ECO:0000305" key="8"/>
<evidence type="ECO:0000305" key="9">
    <source>
    </source>
</evidence>
<evidence type="ECO:0000312" key="10">
    <source>
        <dbReference type="EMBL" id="ACG29886.1"/>
    </source>
</evidence>
<evidence type="ECO:0000312" key="11">
    <source>
        <dbReference type="EMBL" id="ONM19045.1"/>
    </source>
</evidence>